<organism>
    <name type="scientific">Escherichia coli O139:H28 (strain E24377A / ETEC)</name>
    <dbReference type="NCBI Taxonomy" id="331111"/>
    <lineage>
        <taxon>Bacteria</taxon>
        <taxon>Pseudomonadati</taxon>
        <taxon>Pseudomonadota</taxon>
        <taxon>Gammaproteobacteria</taxon>
        <taxon>Enterobacterales</taxon>
        <taxon>Enterobacteriaceae</taxon>
        <taxon>Escherichia</taxon>
    </lineage>
</organism>
<proteinExistence type="inferred from homology"/>
<dbReference type="EMBL" id="CP000800">
    <property type="protein sequence ID" value="ABV17663.1"/>
    <property type="molecule type" value="Genomic_DNA"/>
</dbReference>
<dbReference type="RefSeq" id="WP_000019944.1">
    <property type="nucleotide sequence ID" value="NC_009801.1"/>
</dbReference>
<dbReference type="SMR" id="A7ZNS4"/>
<dbReference type="GeneID" id="93775089"/>
<dbReference type="KEGG" id="ecw:EcE24377A_2393"/>
<dbReference type="HOGENOM" id="CLU_130332_3_0_6"/>
<dbReference type="Proteomes" id="UP000001122">
    <property type="component" value="Chromosome"/>
</dbReference>
<dbReference type="GO" id="GO:0005737">
    <property type="term" value="C:cytoplasm"/>
    <property type="evidence" value="ECO:0007669"/>
    <property type="project" value="UniProtKB-SubCell"/>
</dbReference>
<dbReference type="GO" id="GO:0003677">
    <property type="term" value="F:DNA binding"/>
    <property type="evidence" value="ECO:0007669"/>
    <property type="project" value="InterPro"/>
</dbReference>
<dbReference type="GO" id="GO:0046872">
    <property type="term" value="F:metal ion binding"/>
    <property type="evidence" value="ECO:0007669"/>
    <property type="project" value="InterPro"/>
</dbReference>
<dbReference type="GO" id="GO:0045892">
    <property type="term" value="P:negative regulation of DNA-templated transcription"/>
    <property type="evidence" value="ECO:0007669"/>
    <property type="project" value="UniProtKB-ARBA"/>
</dbReference>
<dbReference type="CDD" id="cd10153">
    <property type="entry name" value="RcnR-FrmR-like_DUF156"/>
    <property type="match status" value="1"/>
</dbReference>
<dbReference type="FunFam" id="1.20.58.1000:FF:000001">
    <property type="entry name" value="Transcriptional repressor RcnR"/>
    <property type="match status" value="1"/>
</dbReference>
<dbReference type="Gene3D" id="1.20.58.1000">
    <property type="entry name" value="Metal-sensitive repressor, helix protomer"/>
    <property type="match status" value="1"/>
</dbReference>
<dbReference type="InterPro" id="IPR003735">
    <property type="entry name" value="Metal_Tscrpt_repr"/>
</dbReference>
<dbReference type="InterPro" id="IPR038390">
    <property type="entry name" value="Metal_Tscrpt_repr_sf"/>
</dbReference>
<dbReference type="NCBIfam" id="NF011613">
    <property type="entry name" value="PRK15039.1"/>
    <property type="match status" value="1"/>
</dbReference>
<dbReference type="PANTHER" id="PTHR33677">
    <property type="entry name" value="TRANSCRIPTIONAL REPRESSOR FRMR-RELATED"/>
    <property type="match status" value="1"/>
</dbReference>
<dbReference type="PANTHER" id="PTHR33677:SF1">
    <property type="entry name" value="TRANSCRIPTIONAL REPRESSOR RCNR"/>
    <property type="match status" value="1"/>
</dbReference>
<dbReference type="Pfam" id="PF02583">
    <property type="entry name" value="Trns_repr_metal"/>
    <property type="match status" value="1"/>
</dbReference>
<accession>A7ZNS4</accession>
<evidence type="ECO:0000305" key="1"/>
<name>RCNR_ECO24</name>
<feature type="chain" id="PRO_0000332694" description="Transcriptional repressor RcnR homolog">
    <location>
        <begin position="1"/>
        <end position="90"/>
    </location>
</feature>
<protein>
    <recommendedName>
        <fullName>Transcriptional repressor RcnR homolog</fullName>
    </recommendedName>
</protein>
<gene>
    <name type="primary">rcnR</name>
    <name type="ordered locus">EcE24377A_2393</name>
</gene>
<keyword id="KW-0963">Cytoplasm</keyword>
<keyword id="KW-1185">Reference proteome</keyword>
<sequence>MSHTIRDKQKLKARASKIQGQVVALKKMLDEPHECAAVLQQIAAIRGAVNGLMREVIKGHLTEHIVHQGDELKREEDLDVVLKVLDSYIK</sequence>
<comment type="subcellular location">
    <subcellularLocation>
        <location evidence="1">Cytoplasm</location>
    </subcellularLocation>
</comment>
<comment type="similarity">
    <text evidence="1">Belongs to the FrmR/RcnR family.</text>
</comment>
<reference key="1">
    <citation type="journal article" date="2008" name="J. Bacteriol.">
        <title>The pangenome structure of Escherichia coli: comparative genomic analysis of E. coli commensal and pathogenic isolates.</title>
        <authorList>
            <person name="Rasko D.A."/>
            <person name="Rosovitz M.J."/>
            <person name="Myers G.S.A."/>
            <person name="Mongodin E.F."/>
            <person name="Fricke W.F."/>
            <person name="Gajer P."/>
            <person name="Crabtree J."/>
            <person name="Sebaihia M."/>
            <person name="Thomson N.R."/>
            <person name="Chaudhuri R."/>
            <person name="Henderson I.R."/>
            <person name="Sperandio V."/>
            <person name="Ravel J."/>
        </authorList>
    </citation>
    <scope>NUCLEOTIDE SEQUENCE [LARGE SCALE GENOMIC DNA]</scope>
    <source>
        <strain>E24377A / ETEC</strain>
    </source>
</reference>